<keyword id="KW-0067">ATP-binding</keyword>
<keyword id="KW-0963">Cytoplasm</keyword>
<keyword id="KW-0324">Glycolysis</keyword>
<keyword id="KW-0418">Kinase</keyword>
<keyword id="KW-0547">Nucleotide-binding</keyword>
<keyword id="KW-0808">Transferase</keyword>
<gene>
    <name evidence="1" type="primary">pgk</name>
    <name type="ordered locus">SAUSA300_0757</name>
</gene>
<name>PGK_STAA3</name>
<comment type="catalytic activity">
    <reaction evidence="1">
        <text>(2R)-3-phosphoglycerate + ATP = (2R)-3-phospho-glyceroyl phosphate + ADP</text>
        <dbReference type="Rhea" id="RHEA:14801"/>
        <dbReference type="ChEBI" id="CHEBI:30616"/>
        <dbReference type="ChEBI" id="CHEBI:57604"/>
        <dbReference type="ChEBI" id="CHEBI:58272"/>
        <dbReference type="ChEBI" id="CHEBI:456216"/>
        <dbReference type="EC" id="2.7.2.3"/>
    </reaction>
</comment>
<comment type="pathway">
    <text evidence="1">Carbohydrate degradation; glycolysis; pyruvate from D-glyceraldehyde 3-phosphate: step 2/5.</text>
</comment>
<comment type="subunit">
    <text evidence="1">Monomer.</text>
</comment>
<comment type="subcellular location">
    <subcellularLocation>
        <location evidence="1">Cytoplasm</location>
    </subcellularLocation>
</comment>
<comment type="similarity">
    <text evidence="1">Belongs to the phosphoglycerate kinase family.</text>
</comment>
<protein>
    <recommendedName>
        <fullName evidence="1">Phosphoglycerate kinase</fullName>
        <ecNumber evidence="1">2.7.2.3</ecNumber>
    </recommendedName>
</protein>
<sequence>MAKKIVSDLDLKGKTVLVRADFNVPLKDGEITNDNRIVQALPTIQYIIEQGGKIVLFSHLGKVKEESDKAKLTLRPVAEDLSKKLDKEVVFVPETRGEKLEAAIKDLKEGDVLLVENTRYEDLDGKKESKNDPELGKYWASLGDVFVNDAFGTAHREHASNVGISTHLETAAGFLMDKEIKFIGGVVNDPHKPVVAILGGAKVSDKINVIKNLVNIADKIIIGGGMAYTFLKAQGKEIGISLLEEDKIDFAKDLLEKHGDKIVLPVDTKVAKEFSNDAKITVVPSDSIPADQEGMDIGPNTVKLFADELEGAHTVVWNGPMGVFEFSNFAQGTIGVCKAIANLKDAITIIGGGDSAAAAISLGFENDFTHISTGGGASLEYLEGKELPGIKAINNK</sequence>
<organism>
    <name type="scientific">Staphylococcus aureus (strain USA300)</name>
    <dbReference type="NCBI Taxonomy" id="367830"/>
    <lineage>
        <taxon>Bacteria</taxon>
        <taxon>Bacillati</taxon>
        <taxon>Bacillota</taxon>
        <taxon>Bacilli</taxon>
        <taxon>Bacillales</taxon>
        <taxon>Staphylococcaceae</taxon>
        <taxon>Staphylococcus</taxon>
    </lineage>
</organism>
<evidence type="ECO:0000255" key="1">
    <source>
        <dbReference type="HAMAP-Rule" id="MF_00145"/>
    </source>
</evidence>
<reference key="1">
    <citation type="journal article" date="2006" name="Lancet">
        <title>Complete genome sequence of USA300, an epidemic clone of community-acquired meticillin-resistant Staphylococcus aureus.</title>
        <authorList>
            <person name="Diep B.A."/>
            <person name="Gill S.R."/>
            <person name="Chang R.F."/>
            <person name="Phan T.H."/>
            <person name="Chen J.H."/>
            <person name="Davidson M.G."/>
            <person name="Lin F."/>
            <person name="Lin J."/>
            <person name="Carleton H.A."/>
            <person name="Mongodin E.F."/>
            <person name="Sensabaugh G.F."/>
            <person name="Perdreau-Remington F."/>
        </authorList>
    </citation>
    <scope>NUCLEOTIDE SEQUENCE [LARGE SCALE GENOMIC DNA]</scope>
    <source>
        <strain>USA300</strain>
    </source>
</reference>
<accession>Q2FIM0</accession>
<dbReference type="EC" id="2.7.2.3" evidence="1"/>
<dbReference type="EMBL" id="CP000255">
    <property type="protein sequence ID" value="ABD20896.1"/>
    <property type="molecule type" value="Genomic_DNA"/>
</dbReference>
<dbReference type="RefSeq" id="WP_001074749.1">
    <property type="nucleotide sequence ID" value="NZ_CP027476.1"/>
</dbReference>
<dbReference type="SMR" id="Q2FIM0"/>
<dbReference type="KEGG" id="saa:SAUSA300_0757"/>
<dbReference type="HOGENOM" id="CLU_025427_0_2_9"/>
<dbReference type="OMA" id="DMIFDIG"/>
<dbReference type="UniPathway" id="UPA00109">
    <property type="reaction ID" value="UER00185"/>
</dbReference>
<dbReference type="Proteomes" id="UP000001939">
    <property type="component" value="Chromosome"/>
</dbReference>
<dbReference type="GO" id="GO:0005829">
    <property type="term" value="C:cytosol"/>
    <property type="evidence" value="ECO:0007669"/>
    <property type="project" value="TreeGrafter"/>
</dbReference>
<dbReference type="GO" id="GO:0043531">
    <property type="term" value="F:ADP binding"/>
    <property type="evidence" value="ECO:0007669"/>
    <property type="project" value="TreeGrafter"/>
</dbReference>
<dbReference type="GO" id="GO:0005524">
    <property type="term" value="F:ATP binding"/>
    <property type="evidence" value="ECO:0007669"/>
    <property type="project" value="UniProtKB-KW"/>
</dbReference>
<dbReference type="GO" id="GO:0004618">
    <property type="term" value="F:phosphoglycerate kinase activity"/>
    <property type="evidence" value="ECO:0007669"/>
    <property type="project" value="UniProtKB-UniRule"/>
</dbReference>
<dbReference type="GO" id="GO:0006094">
    <property type="term" value="P:gluconeogenesis"/>
    <property type="evidence" value="ECO:0007669"/>
    <property type="project" value="TreeGrafter"/>
</dbReference>
<dbReference type="GO" id="GO:0006096">
    <property type="term" value="P:glycolytic process"/>
    <property type="evidence" value="ECO:0007669"/>
    <property type="project" value="UniProtKB-UniRule"/>
</dbReference>
<dbReference type="CDD" id="cd00318">
    <property type="entry name" value="Phosphoglycerate_kinase"/>
    <property type="match status" value="1"/>
</dbReference>
<dbReference type="FunFam" id="3.40.50.1260:FF:000001">
    <property type="entry name" value="Phosphoglycerate kinase"/>
    <property type="match status" value="1"/>
</dbReference>
<dbReference type="FunFam" id="3.40.50.1260:FF:000008">
    <property type="entry name" value="Phosphoglycerate kinase"/>
    <property type="match status" value="1"/>
</dbReference>
<dbReference type="Gene3D" id="3.40.50.1260">
    <property type="entry name" value="Phosphoglycerate kinase, N-terminal domain"/>
    <property type="match status" value="2"/>
</dbReference>
<dbReference type="HAMAP" id="MF_00145">
    <property type="entry name" value="Phosphoglyc_kinase"/>
    <property type="match status" value="1"/>
</dbReference>
<dbReference type="InterPro" id="IPR001576">
    <property type="entry name" value="Phosphoglycerate_kinase"/>
</dbReference>
<dbReference type="InterPro" id="IPR015911">
    <property type="entry name" value="Phosphoglycerate_kinase_CS"/>
</dbReference>
<dbReference type="InterPro" id="IPR015824">
    <property type="entry name" value="Phosphoglycerate_kinase_N"/>
</dbReference>
<dbReference type="InterPro" id="IPR036043">
    <property type="entry name" value="Phosphoglycerate_kinase_sf"/>
</dbReference>
<dbReference type="PANTHER" id="PTHR11406">
    <property type="entry name" value="PHOSPHOGLYCERATE KINASE"/>
    <property type="match status" value="1"/>
</dbReference>
<dbReference type="PANTHER" id="PTHR11406:SF23">
    <property type="entry name" value="PHOSPHOGLYCERATE KINASE 1, CHLOROPLASTIC-RELATED"/>
    <property type="match status" value="1"/>
</dbReference>
<dbReference type="Pfam" id="PF00162">
    <property type="entry name" value="PGK"/>
    <property type="match status" value="1"/>
</dbReference>
<dbReference type="PIRSF" id="PIRSF000724">
    <property type="entry name" value="Pgk"/>
    <property type="match status" value="1"/>
</dbReference>
<dbReference type="PRINTS" id="PR00477">
    <property type="entry name" value="PHGLYCKINASE"/>
</dbReference>
<dbReference type="SUPFAM" id="SSF53748">
    <property type="entry name" value="Phosphoglycerate kinase"/>
    <property type="match status" value="1"/>
</dbReference>
<dbReference type="PROSITE" id="PS00111">
    <property type="entry name" value="PGLYCERATE_KINASE"/>
    <property type="match status" value="1"/>
</dbReference>
<proteinExistence type="inferred from homology"/>
<feature type="chain" id="PRO_1000009648" description="Phosphoglycerate kinase">
    <location>
        <begin position="1"/>
        <end position="396"/>
    </location>
</feature>
<feature type="binding site" evidence="1">
    <location>
        <begin position="21"/>
        <end position="23"/>
    </location>
    <ligand>
        <name>substrate</name>
    </ligand>
</feature>
<feature type="binding site" evidence="1">
    <location>
        <position position="36"/>
    </location>
    <ligand>
        <name>substrate</name>
    </ligand>
</feature>
<feature type="binding site" evidence="1">
    <location>
        <begin position="59"/>
        <end position="62"/>
    </location>
    <ligand>
        <name>substrate</name>
    </ligand>
</feature>
<feature type="binding site" evidence="1">
    <location>
        <position position="119"/>
    </location>
    <ligand>
        <name>substrate</name>
    </ligand>
</feature>
<feature type="binding site" evidence="1">
    <location>
        <position position="156"/>
    </location>
    <ligand>
        <name>substrate</name>
    </ligand>
</feature>
<feature type="binding site" evidence="1">
    <location>
        <position position="206"/>
    </location>
    <ligand>
        <name>ATP</name>
        <dbReference type="ChEBI" id="CHEBI:30616"/>
    </ligand>
</feature>
<feature type="binding site" evidence="1">
    <location>
        <position position="294"/>
    </location>
    <ligand>
        <name>ATP</name>
        <dbReference type="ChEBI" id="CHEBI:30616"/>
    </ligand>
</feature>
<feature type="binding site" evidence="1">
    <location>
        <position position="325"/>
    </location>
    <ligand>
        <name>ATP</name>
        <dbReference type="ChEBI" id="CHEBI:30616"/>
    </ligand>
</feature>
<feature type="binding site" evidence="1">
    <location>
        <begin position="352"/>
        <end position="355"/>
    </location>
    <ligand>
        <name>ATP</name>
        <dbReference type="ChEBI" id="CHEBI:30616"/>
    </ligand>
</feature>